<evidence type="ECO:0000250" key="1"/>
<evidence type="ECO:0000256" key="2">
    <source>
        <dbReference type="SAM" id="MobiDB-lite"/>
    </source>
</evidence>
<evidence type="ECO:0000305" key="3"/>
<feature type="chain" id="PRO_0000327822" description="Ribosome maturation protein SBDS">
    <location>
        <begin position="1"/>
        <end position="274"/>
    </location>
</feature>
<feature type="region of interest" description="Disordered" evidence="2">
    <location>
        <begin position="249"/>
        <end position="274"/>
    </location>
</feature>
<feature type="compositionally biased region" description="Low complexity" evidence="2">
    <location>
        <begin position="260"/>
        <end position="274"/>
    </location>
</feature>
<name>SBDS_DICDI</name>
<reference key="1">
    <citation type="journal article" date="2002" name="Nature">
        <title>Sequence and analysis of chromosome 2 of Dictyostelium discoideum.</title>
        <authorList>
            <person name="Gloeckner G."/>
            <person name="Eichinger L."/>
            <person name="Szafranski K."/>
            <person name="Pachebat J.A."/>
            <person name="Bankier A.T."/>
            <person name="Dear P.H."/>
            <person name="Lehmann R."/>
            <person name="Baumgart C."/>
            <person name="Parra G."/>
            <person name="Abril J.F."/>
            <person name="Guigo R."/>
            <person name="Kumpf K."/>
            <person name="Tunggal B."/>
            <person name="Cox E.C."/>
            <person name="Quail M.A."/>
            <person name="Platzer M."/>
            <person name="Rosenthal A."/>
            <person name="Noegel A.A."/>
        </authorList>
    </citation>
    <scope>NUCLEOTIDE SEQUENCE [LARGE SCALE GENOMIC DNA]</scope>
    <source>
        <strain>AX4</strain>
    </source>
</reference>
<reference key="2">
    <citation type="journal article" date="2005" name="Nature">
        <title>The genome of the social amoeba Dictyostelium discoideum.</title>
        <authorList>
            <person name="Eichinger L."/>
            <person name="Pachebat J.A."/>
            <person name="Gloeckner G."/>
            <person name="Rajandream M.A."/>
            <person name="Sucgang R."/>
            <person name="Berriman M."/>
            <person name="Song J."/>
            <person name="Olsen R."/>
            <person name="Szafranski K."/>
            <person name="Xu Q."/>
            <person name="Tunggal B."/>
            <person name="Kummerfeld S."/>
            <person name="Madera M."/>
            <person name="Konfortov B.A."/>
            <person name="Rivero F."/>
            <person name="Bankier A.T."/>
            <person name="Lehmann R."/>
            <person name="Hamlin N."/>
            <person name="Davies R."/>
            <person name="Gaudet P."/>
            <person name="Fey P."/>
            <person name="Pilcher K."/>
            <person name="Chen G."/>
            <person name="Saunders D."/>
            <person name="Sodergren E.J."/>
            <person name="Davis P."/>
            <person name="Kerhornou A."/>
            <person name="Nie X."/>
            <person name="Hall N."/>
            <person name="Anjard C."/>
            <person name="Hemphill L."/>
            <person name="Bason N."/>
            <person name="Farbrother P."/>
            <person name="Desany B."/>
            <person name="Just E."/>
            <person name="Morio T."/>
            <person name="Rost R."/>
            <person name="Churcher C.M."/>
            <person name="Cooper J."/>
            <person name="Haydock S."/>
            <person name="van Driessche N."/>
            <person name="Cronin A."/>
            <person name="Goodhead I."/>
            <person name="Muzny D.M."/>
            <person name="Mourier T."/>
            <person name="Pain A."/>
            <person name="Lu M."/>
            <person name="Harper D."/>
            <person name="Lindsay R."/>
            <person name="Hauser H."/>
            <person name="James K.D."/>
            <person name="Quiles M."/>
            <person name="Madan Babu M."/>
            <person name="Saito T."/>
            <person name="Buchrieser C."/>
            <person name="Wardroper A."/>
            <person name="Felder M."/>
            <person name="Thangavelu M."/>
            <person name="Johnson D."/>
            <person name="Knights A."/>
            <person name="Loulseged H."/>
            <person name="Mungall K.L."/>
            <person name="Oliver K."/>
            <person name="Price C."/>
            <person name="Quail M.A."/>
            <person name="Urushihara H."/>
            <person name="Hernandez J."/>
            <person name="Rabbinowitsch E."/>
            <person name="Steffen D."/>
            <person name="Sanders M."/>
            <person name="Ma J."/>
            <person name="Kohara Y."/>
            <person name="Sharp S."/>
            <person name="Simmonds M.N."/>
            <person name="Spiegler S."/>
            <person name="Tivey A."/>
            <person name="Sugano S."/>
            <person name="White B."/>
            <person name="Walker D."/>
            <person name="Woodward J.R."/>
            <person name="Winckler T."/>
            <person name="Tanaka Y."/>
            <person name="Shaulsky G."/>
            <person name="Schleicher M."/>
            <person name="Weinstock G.M."/>
            <person name="Rosenthal A."/>
            <person name="Cox E.C."/>
            <person name="Chisholm R.L."/>
            <person name="Gibbs R.A."/>
            <person name="Loomis W.F."/>
            <person name="Platzer M."/>
            <person name="Kay R.R."/>
            <person name="Williams J.G."/>
            <person name="Dear P.H."/>
            <person name="Noegel A.A."/>
            <person name="Barrell B.G."/>
            <person name="Kuspa A."/>
        </authorList>
    </citation>
    <scope>NUCLEOTIDE SEQUENCE [LARGE SCALE GENOMIC DNA]</scope>
    <source>
        <strain>AX4</strain>
    </source>
</reference>
<reference key="3">
    <citation type="journal article" date="2006" name="J. Cell Sci.">
        <title>The Shwachman-Bodian-Diamond syndrome gene encodes an RNA-binding protein that localizes to the pseudopod of Dictyostelium amoebae during chemotaxis.</title>
        <authorList>
            <person name="Wessels D."/>
            <person name="Srikantha T."/>
            <person name="Yi S."/>
            <person name="Kuhl S."/>
            <person name="Aravind L."/>
            <person name="Soll D.R."/>
        </authorList>
    </citation>
    <scope>SUBCELLULAR LOCATION</scope>
</reference>
<dbReference type="EMBL" id="AAFI02000008">
    <property type="protein sequence ID" value="EAL71314.1"/>
    <property type="molecule type" value="Genomic_DNA"/>
</dbReference>
<dbReference type="RefSeq" id="XP_645141.1">
    <property type="nucleotide sequence ID" value="XM_640049.1"/>
</dbReference>
<dbReference type="SMR" id="Q86KZ5"/>
<dbReference type="FunCoup" id="Q86KZ5">
    <property type="interactions" value="615"/>
</dbReference>
<dbReference type="STRING" id="44689.Q86KZ5"/>
<dbReference type="PaxDb" id="44689-DDB0233143"/>
<dbReference type="EnsemblProtists" id="EAL71314">
    <property type="protein sequence ID" value="EAL71314"/>
    <property type="gene ID" value="DDB_G0272324"/>
</dbReference>
<dbReference type="GeneID" id="8618311"/>
<dbReference type="KEGG" id="ddi:DDB_G0272324"/>
<dbReference type="dictyBase" id="DDB_G0272324">
    <property type="gene designation" value="sbds"/>
</dbReference>
<dbReference type="VEuPathDB" id="AmoebaDB:DDB_G0272324"/>
<dbReference type="eggNOG" id="KOG2917">
    <property type="taxonomic scope" value="Eukaryota"/>
</dbReference>
<dbReference type="HOGENOM" id="CLU_043216_1_1_1"/>
<dbReference type="InParanoid" id="Q86KZ5"/>
<dbReference type="OMA" id="AVNPQMD"/>
<dbReference type="PhylomeDB" id="Q86KZ5"/>
<dbReference type="PRO" id="PR:Q86KZ5"/>
<dbReference type="Proteomes" id="UP000002195">
    <property type="component" value="Chromosome 2"/>
</dbReference>
<dbReference type="GO" id="GO:0005737">
    <property type="term" value="C:cytoplasm"/>
    <property type="evidence" value="ECO:0000314"/>
    <property type="project" value="dictyBase"/>
</dbReference>
<dbReference type="GO" id="GO:0005730">
    <property type="term" value="C:nucleolus"/>
    <property type="evidence" value="ECO:0007669"/>
    <property type="project" value="UniProtKB-SubCell"/>
</dbReference>
<dbReference type="GO" id="GO:0005654">
    <property type="term" value="C:nucleoplasm"/>
    <property type="evidence" value="ECO:0007669"/>
    <property type="project" value="UniProtKB-SubCell"/>
</dbReference>
<dbReference type="GO" id="GO:0031143">
    <property type="term" value="C:pseudopodium"/>
    <property type="evidence" value="ECO:0000314"/>
    <property type="project" value="dictyBase"/>
</dbReference>
<dbReference type="GO" id="GO:0005819">
    <property type="term" value="C:spindle"/>
    <property type="evidence" value="ECO:0007669"/>
    <property type="project" value="UniProtKB-SubCell"/>
</dbReference>
<dbReference type="GO" id="GO:0042256">
    <property type="term" value="P:cytosolic ribosome assembly"/>
    <property type="evidence" value="ECO:0000315"/>
    <property type="project" value="dictyBase"/>
</dbReference>
<dbReference type="FunFam" id="3.30.70.240:FF:000009">
    <property type="entry name" value="SBDS ribosome maturation factor"/>
    <property type="match status" value="1"/>
</dbReference>
<dbReference type="FunFam" id="1.10.10.900:FF:000001">
    <property type="entry name" value="SBDS, ribosome maturation factor"/>
    <property type="match status" value="1"/>
</dbReference>
<dbReference type="FunFam" id="3.30.1250.10:FF:000001">
    <property type="entry name" value="SBDS, ribosome maturation factor"/>
    <property type="match status" value="1"/>
</dbReference>
<dbReference type="Gene3D" id="3.30.70.240">
    <property type="match status" value="1"/>
</dbReference>
<dbReference type="Gene3D" id="3.30.1250.10">
    <property type="entry name" value="Ribosome maturation protein SBDS, N-terminal domain"/>
    <property type="match status" value="1"/>
</dbReference>
<dbReference type="Gene3D" id="1.10.10.900">
    <property type="entry name" value="SBDS protein C-terminal domain, subdomain 1"/>
    <property type="match status" value="1"/>
</dbReference>
<dbReference type="InterPro" id="IPR036786">
    <property type="entry name" value="Ribosome_mat_SBDS_N_sf"/>
</dbReference>
<dbReference type="InterPro" id="IPR002140">
    <property type="entry name" value="Sdo1/SBDS"/>
</dbReference>
<dbReference type="InterPro" id="IPR039100">
    <property type="entry name" value="Sdo1/SBDS-like"/>
</dbReference>
<dbReference type="InterPro" id="IPR046928">
    <property type="entry name" value="SDO1/SBDS_C"/>
</dbReference>
<dbReference type="InterPro" id="IPR018978">
    <property type="entry name" value="SDO1/SBDS_central"/>
</dbReference>
<dbReference type="InterPro" id="IPR037188">
    <property type="entry name" value="Sdo1/SBDS_central_sf"/>
</dbReference>
<dbReference type="InterPro" id="IPR019783">
    <property type="entry name" value="SDO1/SBDS_N"/>
</dbReference>
<dbReference type="NCBIfam" id="TIGR00291">
    <property type="entry name" value="RNA_SBDS"/>
    <property type="match status" value="1"/>
</dbReference>
<dbReference type="PANTHER" id="PTHR10927">
    <property type="entry name" value="RIBOSOME MATURATION PROTEIN SBDS"/>
    <property type="match status" value="1"/>
</dbReference>
<dbReference type="PANTHER" id="PTHR10927:SF1">
    <property type="entry name" value="RIBOSOME MATURATION PROTEIN SBDS"/>
    <property type="match status" value="1"/>
</dbReference>
<dbReference type="Pfam" id="PF20268">
    <property type="entry name" value="SBDS_C"/>
    <property type="match status" value="1"/>
</dbReference>
<dbReference type="Pfam" id="PF09377">
    <property type="entry name" value="SBDS_domain_II"/>
    <property type="match status" value="1"/>
</dbReference>
<dbReference type="Pfam" id="PF01172">
    <property type="entry name" value="SBDS_N"/>
    <property type="match status" value="1"/>
</dbReference>
<dbReference type="SUPFAM" id="SSF89895">
    <property type="entry name" value="FYSH domain"/>
    <property type="match status" value="1"/>
</dbReference>
<dbReference type="SUPFAM" id="SSF109728">
    <property type="entry name" value="Hypothetical protein AF0491, middle domain"/>
    <property type="match status" value="1"/>
</dbReference>
<protein>
    <recommendedName>
        <fullName>Ribosome maturation protein SBDS</fullName>
    </recommendedName>
</protein>
<keyword id="KW-0963">Cytoplasm</keyword>
<keyword id="KW-0206">Cytoskeleton</keyword>
<keyword id="KW-0539">Nucleus</keyword>
<keyword id="KW-1185">Reference proteome</keyword>
<keyword id="KW-0690">Ribosome biogenesis</keyword>
<comment type="function">
    <text evidence="1">Required for the assembly of mature ribosomes and ribosome biogenesis. Triggers the GTP-dependent release of ribosome maturation factors from 60S pre-ribosomes in the cytoplasm, thereby activating ribosomes for translation competence by allowing 80S ribosome assembly. Required for normal levels of protein synthesis. May play a role in cellular stress resistance. May play a role in cellular response to DNA damage. May play a role in cell proliferation (By similarity).</text>
</comment>
<comment type="subunit">
    <text evidence="1">Associates with the 60S ribosomal subunit.</text>
</comment>
<comment type="subcellular location">
    <subcellularLocation>
        <location evidence="1">Cytoplasm</location>
    </subcellularLocation>
    <subcellularLocation>
        <location evidence="1">Nucleus</location>
        <location evidence="1">Nucleolus</location>
    </subcellularLocation>
    <subcellularLocation>
        <location evidence="1">Nucleus</location>
        <location evidence="1">Nucleoplasm</location>
    </subcellularLocation>
    <subcellularLocation>
        <location evidence="1">Cytoplasm</location>
        <location evidence="1">Cytoskeleton</location>
        <location evidence="1">Spindle</location>
    </subcellularLocation>
    <text evidence="1">Primarily detected in the cytoplasm, and at low levels in nucleus and nucleolus. Detected at the mitotic spindle. Colocalizes with the microtubule organizing center during interphase (By similarity).</text>
</comment>
<comment type="similarity">
    <text evidence="3">Belongs to the SDO1/SBDS family.</text>
</comment>
<gene>
    <name type="primary">sbds</name>
    <name type="ORF">DDB_G0272324</name>
</gene>
<proteinExistence type="inferred from homology"/>
<organism>
    <name type="scientific">Dictyostelium discoideum</name>
    <name type="common">Social amoeba</name>
    <dbReference type="NCBI Taxonomy" id="44689"/>
    <lineage>
        <taxon>Eukaryota</taxon>
        <taxon>Amoebozoa</taxon>
        <taxon>Evosea</taxon>
        <taxon>Eumycetozoa</taxon>
        <taxon>Dictyostelia</taxon>
        <taxon>Dictyosteliales</taxon>
        <taxon>Dictyosteliaceae</taxon>
        <taxon>Dictyostelium</taxon>
    </lineage>
</organism>
<sequence length="274" mass="30570">MSIFTPVNNKTLTNIVVVRYKKGAAKFEIACYPSKVQSYRSKIEKDLNEVIQIHRIFTNVSKGIIAKKDELIKAFGTDNEQEIILLILEKGELQVSSKERDNQSEQTFKDIATIVAEKCVNTETQRPIPVSIIEKAMKDVHYSIHPTKSSKQQSLEVIKQISSVIPIQRAQMRLNITIPTKESKTLNRDKLMVLVSKIEEEDRDGGGLSIVCLVDPGSYRKIDELIKQETKGKGFIDIINLAVAKEGETKINETGKSAPTSTTTTTTTTTSSSK</sequence>
<accession>Q86KZ5</accession>
<accession>Q55A43</accession>